<proteinExistence type="inferred from homology"/>
<sequence length="297" mass="32320">MNIAIRNPVPVRREEGSLQVGLDPNDRIETAKVFAVYGKGGIGKSTTSSNLSVAFSKLGKRVLQIGCDPKHDSTFTLTKRLAPTVIDALEAVNFHSEELRAEDFVVEGYNGVKCVEAGGPPAGTGCGGYVVGQTVKLLKEHHLLEDTDVVVFDVLGDVVCGGFASPLQHADRALIVTANDFDSIFAMNRIVAAIHTKSKNYGVRLGGVIANRSAKTDEIDRFNAAVGLRRLAHFPDLDVVRRSRLKKSTLFEMEPTPELKAVTDEYMQLAETLWAGADPCEAVPMKDRDLFEFLGFD</sequence>
<evidence type="ECO:0000255" key="1">
    <source>
        <dbReference type="HAMAP-Rule" id="MF_00355"/>
    </source>
</evidence>
<comment type="function">
    <text evidence="1">Component of the dark-operative protochlorophyllide reductase (DPOR) that uses Mg-ATP and reduced ferredoxin to reduce ring D of protochlorophyllide (Pchlide) to form chlorophyllide a (Chlide). This reaction is light-independent. The L component serves as a unique electron donor to the NB-component of the complex, and binds Mg-ATP.</text>
</comment>
<comment type="catalytic activity">
    <reaction evidence="1">
        <text>chlorophyllide a + oxidized 2[4Fe-4S]-[ferredoxin] + 2 ADP + 2 phosphate = protochlorophyllide a + reduced 2[4Fe-4S]-[ferredoxin] + 2 ATP + 2 H2O</text>
        <dbReference type="Rhea" id="RHEA:28202"/>
        <dbReference type="Rhea" id="RHEA-COMP:10002"/>
        <dbReference type="Rhea" id="RHEA-COMP:10004"/>
        <dbReference type="ChEBI" id="CHEBI:15377"/>
        <dbReference type="ChEBI" id="CHEBI:30616"/>
        <dbReference type="ChEBI" id="CHEBI:33722"/>
        <dbReference type="ChEBI" id="CHEBI:33723"/>
        <dbReference type="ChEBI" id="CHEBI:43474"/>
        <dbReference type="ChEBI" id="CHEBI:83348"/>
        <dbReference type="ChEBI" id="CHEBI:83350"/>
        <dbReference type="ChEBI" id="CHEBI:456216"/>
        <dbReference type="EC" id="1.3.7.7"/>
    </reaction>
</comment>
<comment type="cofactor">
    <cofactor evidence="1">
        <name>[4Fe-4S] cluster</name>
        <dbReference type="ChEBI" id="CHEBI:49883"/>
    </cofactor>
    <text evidence="1">Binds 1 [4Fe-4S] cluster per dimer.</text>
</comment>
<comment type="pathway">
    <text evidence="1">Porphyrin-containing compound metabolism; bacteriochlorophyll biosynthesis (light-independent).</text>
</comment>
<comment type="subunit">
    <text evidence="1">Homodimer. Protochlorophyllide reductase is composed of three subunits; BchL, BchN and BchB.</text>
</comment>
<comment type="similarity">
    <text evidence="1">Belongs to the NifH/BchL/ChlL family.</text>
</comment>
<keyword id="KW-0004">4Fe-4S</keyword>
<keyword id="KW-0067">ATP-binding</keyword>
<keyword id="KW-0077">Bacteriochlorophyll biosynthesis</keyword>
<keyword id="KW-0149">Chlorophyll biosynthesis</keyword>
<keyword id="KW-0408">Iron</keyword>
<keyword id="KW-0411">Iron-sulfur</keyword>
<keyword id="KW-0460">Magnesium</keyword>
<keyword id="KW-0479">Metal-binding</keyword>
<keyword id="KW-0547">Nucleotide-binding</keyword>
<keyword id="KW-0560">Oxidoreductase</keyword>
<keyword id="KW-0602">Photosynthesis</keyword>
<dbReference type="EC" id="1.3.7.7" evidence="1"/>
<dbReference type="EMBL" id="CP001298">
    <property type="protein sequence ID" value="ACK86042.1"/>
    <property type="molecule type" value="Genomic_DNA"/>
</dbReference>
<dbReference type="RefSeq" id="WP_015952890.1">
    <property type="nucleotide sequence ID" value="NC_011757.1"/>
</dbReference>
<dbReference type="SMR" id="B7KVV7"/>
<dbReference type="KEGG" id="mch:Mchl_5280"/>
<dbReference type="HOGENOM" id="CLU_059373_2_0_5"/>
<dbReference type="UniPathway" id="UPA00671"/>
<dbReference type="Proteomes" id="UP000002385">
    <property type="component" value="Chromosome"/>
</dbReference>
<dbReference type="GO" id="GO:0051539">
    <property type="term" value="F:4 iron, 4 sulfur cluster binding"/>
    <property type="evidence" value="ECO:0007669"/>
    <property type="project" value="UniProtKB-UniRule"/>
</dbReference>
<dbReference type="GO" id="GO:0005524">
    <property type="term" value="F:ATP binding"/>
    <property type="evidence" value="ECO:0007669"/>
    <property type="project" value="UniProtKB-UniRule"/>
</dbReference>
<dbReference type="GO" id="GO:0046872">
    <property type="term" value="F:metal ion binding"/>
    <property type="evidence" value="ECO:0007669"/>
    <property type="project" value="UniProtKB-KW"/>
</dbReference>
<dbReference type="GO" id="GO:0016730">
    <property type="term" value="F:oxidoreductase activity, acting on iron-sulfur proteins as donors"/>
    <property type="evidence" value="ECO:0007669"/>
    <property type="project" value="InterPro"/>
</dbReference>
<dbReference type="GO" id="GO:0016636">
    <property type="term" value="F:oxidoreductase activity, acting on the CH-CH group of donors, iron-sulfur protein as acceptor"/>
    <property type="evidence" value="ECO:0007669"/>
    <property type="project" value="UniProtKB-UniRule"/>
</dbReference>
<dbReference type="GO" id="GO:0036070">
    <property type="term" value="P:light-independent bacteriochlorophyll biosynthetic process"/>
    <property type="evidence" value="ECO:0007669"/>
    <property type="project" value="UniProtKB-UniRule"/>
</dbReference>
<dbReference type="GO" id="GO:0019685">
    <property type="term" value="P:photosynthesis, dark reaction"/>
    <property type="evidence" value="ECO:0007669"/>
    <property type="project" value="InterPro"/>
</dbReference>
<dbReference type="CDD" id="cd02032">
    <property type="entry name" value="Bchl-like"/>
    <property type="match status" value="1"/>
</dbReference>
<dbReference type="Gene3D" id="3.40.50.300">
    <property type="entry name" value="P-loop containing nucleotide triphosphate hydrolases"/>
    <property type="match status" value="1"/>
</dbReference>
<dbReference type="HAMAP" id="MF_00355">
    <property type="entry name" value="ChlL_BchL"/>
    <property type="match status" value="1"/>
</dbReference>
<dbReference type="InterPro" id="IPR030655">
    <property type="entry name" value="NifH/chlL_CS"/>
</dbReference>
<dbReference type="InterPro" id="IPR000392">
    <property type="entry name" value="NifH/frxC"/>
</dbReference>
<dbReference type="InterPro" id="IPR027417">
    <property type="entry name" value="P-loop_NTPase"/>
</dbReference>
<dbReference type="InterPro" id="IPR005971">
    <property type="entry name" value="Protochlorophyllide_ATP-bd"/>
</dbReference>
<dbReference type="NCBIfam" id="TIGR01281">
    <property type="entry name" value="DPOR_bchL"/>
    <property type="match status" value="1"/>
</dbReference>
<dbReference type="PANTHER" id="PTHR42864">
    <property type="entry name" value="LIGHT-INDEPENDENT PROTOCHLOROPHYLLIDE REDUCTASE IRON-SULFUR ATP-BINDING PROTEIN"/>
    <property type="match status" value="1"/>
</dbReference>
<dbReference type="PANTHER" id="PTHR42864:SF2">
    <property type="entry name" value="LIGHT-INDEPENDENT PROTOCHLOROPHYLLIDE REDUCTASE IRON-SULFUR ATP-BINDING PROTEIN"/>
    <property type="match status" value="1"/>
</dbReference>
<dbReference type="Pfam" id="PF00142">
    <property type="entry name" value="Fer4_NifH"/>
    <property type="match status" value="1"/>
</dbReference>
<dbReference type="PIRSF" id="PIRSF000363">
    <property type="entry name" value="Nitrogenase_iron"/>
    <property type="match status" value="1"/>
</dbReference>
<dbReference type="PRINTS" id="PR00091">
    <property type="entry name" value="NITROGNASEII"/>
</dbReference>
<dbReference type="SUPFAM" id="SSF52540">
    <property type="entry name" value="P-loop containing nucleoside triphosphate hydrolases"/>
    <property type="match status" value="1"/>
</dbReference>
<dbReference type="PROSITE" id="PS00746">
    <property type="entry name" value="NIFH_FRXC_1"/>
    <property type="match status" value="1"/>
</dbReference>
<dbReference type="PROSITE" id="PS00692">
    <property type="entry name" value="NIFH_FRXC_2"/>
    <property type="match status" value="1"/>
</dbReference>
<dbReference type="PROSITE" id="PS51026">
    <property type="entry name" value="NIFH_FRXC_3"/>
    <property type="match status" value="1"/>
</dbReference>
<protein>
    <recommendedName>
        <fullName evidence="1">Light-independent protochlorophyllide reductase iron-sulfur ATP-binding protein</fullName>
        <shortName evidence="1">DPOR subunit L</shortName>
        <shortName evidence="1">LI-POR subunit L</shortName>
        <ecNumber evidence="1">1.3.7.7</ecNumber>
    </recommendedName>
</protein>
<feature type="chain" id="PRO_1000133438" description="Light-independent protochlorophyllide reductase iron-sulfur ATP-binding protein">
    <location>
        <begin position="1"/>
        <end position="297"/>
    </location>
</feature>
<feature type="binding site" evidence="1">
    <location>
        <begin position="41"/>
        <end position="46"/>
    </location>
    <ligand>
        <name>ATP</name>
        <dbReference type="ChEBI" id="CHEBI:30616"/>
    </ligand>
</feature>
<feature type="binding site" evidence="1">
    <location>
        <position position="45"/>
    </location>
    <ligand>
        <name>Mg(2+)</name>
        <dbReference type="ChEBI" id="CHEBI:18420"/>
    </ligand>
</feature>
<feature type="binding site" evidence="1">
    <location>
        <position position="70"/>
    </location>
    <ligand>
        <name>ATP</name>
        <dbReference type="ChEBI" id="CHEBI:30616"/>
    </ligand>
</feature>
<feature type="binding site" evidence="1">
    <location>
        <position position="126"/>
    </location>
    <ligand>
        <name>[4Fe-4S] cluster</name>
        <dbReference type="ChEBI" id="CHEBI:49883"/>
        <note>ligand shared between dimeric partners</note>
    </ligand>
</feature>
<feature type="binding site" evidence="1">
    <location>
        <position position="160"/>
    </location>
    <ligand>
        <name>[4Fe-4S] cluster</name>
        <dbReference type="ChEBI" id="CHEBI:49883"/>
        <note>ligand shared between dimeric partners</note>
    </ligand>
</feature>
<feature type="binding site" evidence="1">
    <location>
        <begin position="211"/>
        <end position="212"/>
    </location>
    <ligand>
        <name>ATP</name>
        <dbReference type="ChEBI" id="CHEBI:30616"/>
    </ligand>
</feature>
<feature type="binding site" evidence="1">
    <location>
        <begin position="235"/>
        <end position="237"/>
    </location>
    <ligand>
        <name>ATP</name>
        <dbReference type="ChEBI" id="CHEBI:30616"/>
    </ligand>
</feature>
<reference key="1">
    <citation type="submission" date="2008-12" db="EMBL/GenBank/DDBJ databases">
        <title>Complete sequence of chromosome of Methylobacterium chloromethanicum CM4.</title>
        <authorList>
            <consortium name="US DOE Joint Genome Institute"/>
            <person name="Lucas S."/>
            <person name="Copeland A."/>
            <person name="Lapidus A."/>
            <person name="Glavina del Rio T."/>
            <person name="Dalin E."/>
            <person name="Tice H."/>
            <person name="Bruce D."/>
            <person name="Goodwin L."/>
            <person name="Pitluck S."/>
            <person name="Chertkov O."/>
            <person name="Brettin T."/>
            <person name="Detter J.C."/>
            <person name="Han C."/>
            <person name="Larimer F."/>
            <person name="Land M."/>
            <person name="Hauser L."/>
            <person name="Kyrpides N."/>
            <person name="Mikhailova N."/>
            <person name="Marx C."/>
            <person name="Richardson P."/>
        </authorList>
    </citation>
    <scope>NUCLEOTIDE SEQUENCE [LARGE SCALE GENOMIC DNA]</scope>
    <source>
        <strain>CM4 / NCIMB 13688</strain>
    </source>
</reference>
<gene>
    <name evidence="1" type="primary">bchL</name>
    <name type="ordered locus">Mchl_5280</name>
</gene>
<organism>
    <name type="scientific">Methylorubrum extorquens (strain CM4 / NCIMB 13688)</name>
    <name type="common">Methylobacterium extorquens</name>
    <dbReference type="NCBI Taxonomy" id="440085"/>
    <lineage>
        <taxon>Bacteria</taxon>
        <taxon>Pseudomonadati</taxon>
        <taxon>Pseudomonadota</taxon>
        <taxon>Alphaproteobacteria</taxon>
        <taxon>Hyphomicrobiales</taxon>
        <taxon>Methylobacteriaceae</taxon>
        <taxon>Methylorubrum</taxon>
    </lineage>
</organism>
<accession>B7KVV7</accession>
<name>BCHL_METC4</name>